<protein>
    <recommendedName>
        <fullName evidence="1">Bifunctional protein GlmU</fullName>
    </recommendedName>
    <domain>
        <recommendedName>
            <fullName evidence="1">UDP-N-acetylglucosamine pyrophosphorylase</fullName>
            <ecNumber evidence="1">2.7.7.23</ecNumber>
        </recommendedName>
        <alternativeName>
            <fullName evidence="1">N-acetylglucosamine-1-phosphate uridyltransferase</fullName>
        </alternativeName>
    </domain>
    <domain>
        <recommendedName>
            <fullName evidence="1">Glucosamine-1-phosphate N-acetyltransferase</fullName>
            <ecNumber evidence="1">2.3.1.157</ecNumber>
        </recommendedName>
    </domain>
</protein>
<accession>A4WGF8</accession>
<gene>
    <name evidence="1" type="primary">glmU</name>
    <name type="ordered locus">Ent638_4135</name>
</gene>
<dbReference type="EC" id="2.7.7.23" evidence="1"/>
<dbReference type="EC" id="2.3.1.157" evidence="1"/>
<dbReference type="EMBL" id="CP000653">
    <property type="protein sequence ID" value="ABP62788.1"/>
    <property type="molecule type" value="Genomic_DNA"/>
</dbReference>
<dbReference type="RefSeq" id="WP_015961090.1">
    <property type="nucleotide sequence ID" value="NC_009436.1"/>
</dbReference>
<dbReference type="SMR" id="A4WGF8"/>
<dbReference type="STRING" id="399742.Ent638_4135"/>
<dbReference type="KEGG" id="ent:Ent638_4135"/>
<dbReference type="eggNOG" id="COG1207">
    <property type="taxonomic scope" value="Bacteria"/>
</dbReference>
<dbReference type="HOGENOM" id="CLU_029499_15_2_6"/>
<dbReference type="OrthoDB" id="9775031at2"/>
<dbReference type="UniPathway" id="UPA00113">
    <property type="reaction ID" value="UER00532"/>
</dbReference>
<dbReference type="UniPathway" id="UPA00113">
    <property type="reaction ID" value="UER00533"/>
</dbReference>
<dbReference type="UniPathway" id="UPA00973"/>
<dbReference type="Proteomes" id="UP000000230">
    <property type="component" value="Chromosome"/>
</dbReference>
<dbReference type="GO" id="GO:0005737">
    <property type="term" value="C:cytoplasm"/>
    <property type="evidence" value="ECO:0007669"/>
    <property type="project" value="UniProtKB-SubCell"/>
</dbReference>
<dbReference type="GO" id="GO:0016020">
    <property type="term" value="C:membrane"/>
    <property type="evidence" value="ECO:0007669"/>
    <property type="project" value="GOC"/>
</dbReference>
<dbReference type="GO" id="GO:0019134">
    <property type="term" value="F:glucosamine-1-phosphate N-acetyltransferase activity"/>
    <property type="evidence" value="ECO:0007669"/>
    <property type="project" value="UniProtKB-UniRule"/>
</dbReference>
<dbReference type="GO" id="GO:0000287">
    <property type="term" value="F:magnesium ion binding"/>
    <property type="evidence" value="ECO:0007669"/>
    <property type="project" value="UniProtKB-UniRule"/>
</dbReference>
<dbReference type="GO" id="GO:0003977">
    <property type="term" value="F:UDP-N-acetylglucosamine diphosphorylase activity"/>
    <property type="evidence" value="ECO:0007669"/>
    <property type="project" value="UniProtKB-UniRule"/>
</dbReference>
<dbReference type="GO" id="GO:0000902">
    <property type="term" value="P:cell morphogenesis"/>
    <property type="evidence" value="ECO:0007669"/>
    <property type="project" value="UniProtKB-UniRule"/>
</dbReference>
<dbReference type="GO" id="GO:0071555">
    <property type="term" value="P:cell wall organization"/>
    <property type="evidence" value="ECO:0007669"/>
    <property type="project" value="UniProtKB-KW"/>
</dbReference>
<dbReference type="GO" id="GO:0009245">
    <property type="term" value="P:lipid A biosynthetic process"/>
    <property type="evidence" value="ECO:0007669"/>
    <property type="project" value="UniProtKB-UniRule"/>
</dbReference>
<dbReference type="GO" id="GO:0009252">
    <property type="term" value="P:peptidoglycan biosynthetic process"/>
    <property type="evidence" value="ECO:0007669"/>
    <property type="project" value="UniProtKB-UniRule"/>
</dbReference>
<dbReference type="GO" id="GO:0008360">
    <property type="term" value="P:regulation of cell shape"/>
    <property type="evidence" value="ECO:0007669"/>
    <property type="project" value="UniProtKB-KW"/>
</dbReference>
<dbReference type="GO" id="GO:0006048">
    <property type="term" value="P:UDP-N-acetylglucosamine biosynthetic process"/>
    <property type="evidence" value="ECO:0007669"/>
    <property type="project" value="UniProtKB-UniPathway"/>
</dbReference>
<dbReference type="CDD" id="cd02540">
    <property type="entry name" value="GT2_GlmU_N_bac"/>
    <property type="match status" value="1"/>
</dbReference>
<dbReference type="CDD" id="cd03353">
    <property type="entry name" value="LbH_GlmU_C"/>
    <property type="match status" value="1"/>
</dbReference>
<dbReference type="FunFam" id="2.160.10.10:FF:000011">
    <property type="entry name" value="Bifunctional protein GlmU"/>
    <property type="match status" value="1"/>
</dbReference>
<dbReference type="FunFam" id="3.90.550.10:FF:000006">
    <property type="entry name" value="Bifunctional protein GlmU"/>
    <property type="match status" value="1"/>
</dbReference>
<dbReference type="Gene3D" id="2.160.10.10">
    <property type="entry name" value="Hexapeptide repeat proteins"/>
    <property type="match status" value="1"/>
</dbReference>
<dbReference type="Gene3D" id="3.90.550.10">
    <property type="entry name" value="Spore Coat Polysaccharide Biosynthesis Protein SpsA, Chain A"/>
    <property type="match status" value="1"/>
</dbReference>
<dbReference type="HAMAP" id="MF_01631">
    <property type="entry name" value="GlmU"/>
    <property type="match status" value="1"/>
</dbReference>
<dbReference type="InterPro" id="IPR005882">
    <property type="entry name" value="Bifunctional_GlmU"/>
</dbReference>
<dbReference type="InterPro" id="IPR050065">
    <property type="entry name" value="GlmU-like"/>
</dbReference>
<dbReference type="InterPro" id="IPR038009">
    <property type="entry name" value="GlmU_C_LbH"/>
</dbReference>
<dbReference type="InterPro" id="IPR001451">
    <property type="entry name" value="Hexapep"/>
</dbReference>
<dbReference type="InterPro" id="IPR018357">
    <property type="entry name" value="Hexapep_transf_CS"/>
</dbReference>
<dbReference type="InterPro" id="IPR025877">
    <property type="entry name" value="MobA-like_NTP_Trfase"/>
</dbReference>
<dbReference type="InterPro" id="IPR029044">
    <property type="entry name" value="Nucleotide-diphossugar_trans"/>
</dbReference>
<dbReference type="InterPro" id="IPR011004">
    <property type="entry name" value="Trimer_LpxA-like_sf"/>
</dbReference>
<dbReference type="NCBIfam" id="TIGR01173">
    <property type="entry name" value="glmU"/>
    <property type="match status" value="1"/>
</dbReference>
<dbReference type="NCBIfam" id="NF006986">
    <property type="entry name" value="PRK09451.1"/>
    <property type="match status" value="1"/>
</dbReference>
<dbReference type="PANTHER" id="PTHR43584:SF3">
    <property type="entry name" value="BIFUNCTIONAL PROTEIN GLMU"/>
    <property type="match status" value="1"/>
</dbReference>
<dbReference type="PANTHER" id="PTHR43584">
    <property type="entry name" value="NUCLEOTIDYL TRANSFERASE"/>
    <property type="match status" value="1"/>
</dbReference>
<dbReference type="Pfam" id="PF00132">
    <property type="entry name" value="Hexapep"/>
    <property type="match status" value="1"/>
</dbReference>
<dbReference type="Pfam" id="PF12804">
    <property type="entry name" value="NTP_transf_3"/>
    <property type="match status" value="1"/>
</dbReference>
<dbReference type="SUPFAM" id="SSF53448">
    <property type="entry name" value="Nucleotide-diphospho-sugar transferases"/>
    <property type="match status" value="1"/>
</dbReference>
<dbReference type="SUPFAM" id="SSF51161">
    <property type="entry name" value="Trimeric LpxA-like enzymes"/>
    <property type="match status" value="1"/>
</dbReference>
<dbReference type="PROSITE" id="PS00101">
    <property type="entry name" value="HEXAPEP_TRANSFERASES"/>
    <property type="match status" value="1"/>
</dbReference>
<comment type="function">
    <text evidence="1">Catalyzes the last two sequential reactions in the de novo biosynthetic pathway for UDP-N-acetylglucosamine (UDP-GlcNAc). The C-terminal domain catalyzes the transfer of acetyl group from acetyl coenzyme A to glucosamine-1-phosphate (GlcN-1-P) to produce N-acetylglucosamine-1-phosphate (GlcNAc-1-P), which is converted into UDP-GlcNAc by the transfer of uridine 5-monophosphate (from uridine 5-triphosphate), a reaction catalyzed by the N-terminal domain.</text>
</comment>
<comment type="catalytic activity">
    <reaction evidence="1">
        <text>alpha-D-glucosamine 1-phosphate + acetyl-CoA = N-acetyl-alpha-D-glucosamine 1-phosphate + CoA + H(+)</text>
        <dbReference type="Rhea" id="RHEA:13725"/>
        <dbReference type="ChEBI" id="CHEBI:15378"/>
        <dbReference type="ChEBI" id="CHEBI:57287"/>
        <dbReference type="ChEBI" id="CHEBI:57288"/>
        <dbReference type="ChEBI" id="CHEBI:57776"/>
        <dbReference type="ChEBI" id="CHEBI:58516"/>
        <dbReference type="EC" id="2.3.1.157"/>
    </reaction>
</comment>
<comment type="catalytic activity">
    <reaction evidence="1">
        <text>N-acetyl-alpha-D-glucosamine 1-phosphate + UTP + H(+) = UDP-N-acetyl-alpha-D-glucosamine + diphosphate</text>
        <dbReference type="Rhea" id="RHEA:13509"/>
        <dbReference type="ChEBI" id="CHEBI:15378"/>
        <dbReference type="ChEBI" id="CHEBI:33019"/>
        <dbReference type="ChEBI" id="CHEBI:46398"/>
        <dbReference type="ChEBI" id="CHEBI:57705"/>
        <dbReference type="ChEBI" id="CHEBI:57776"/>
        <dbReference type="EC" id="2.7.7.23"/>
    </reaction>
</comment>
<comment type="cofactor">
    <cofactor evidence="1">
        <name>Mg(2+)</name>
        <dbReference type="ChEBI" id="CHEBI:18420"/>
    </cofactor>
    <text evidence="1">Binds 1 Mg(2+) ion per subunit.</text>
</comment>
<comment type="pathway">
    <text evidence="1">Nucleotide-sugar biosynthesis; UDP-N-acetyl-alpha-D-glucosamine biosynthesis; N-acetyl-alpha-D-glucosamine 1-phosphate from alpha-D-glucosamine 6-phosphate (route II): step 2/2.</text>
</comment>
<comment type="pathway">
    <text evidence="1">Nucleotide-sugar biosynthesis; UDP-N-acetyl-alpha-D-glucosamine biosynthesis; UDP-N-acetyl-alpha-D-glucosamine from N-acetyl-alpha-D-glucosamine 1-phosphate: step 1/1.</text>
</comment>
<comment type="pathway">
    <text evidence="1">Bacterial outer membrane biogenesis; LPS lipid A biosynthesis.</text>
</comment>
<comment type="subunit">
    <text evidence="1">Homotrimer.</text>
</comment>
<comment type="subcellular location">
    <subcellularLocation>
        <location evidence="1">Cytoplasm</location>
    </subcellularLocation>
</comment>
<comment type="similarity">
    <text evidence="1">In the N-terminal section; belongs to the N-acetylglucosamine-1-phosphate uridyltransferase family.</text>
</comment>
<comment type="similarity">
    <text evidence="1">In the C-terminal section; belongs to the transferase hexapeptide repeat family.</text>
</comment>
<proteinExistence type="inferred from homology"/>
<keyword id="KW-0012">Acyltransferase</keyword>
<keyword id="KW-0133">Cell shape</keyword>
<keyword id="KW-0961">Cell wall biogenesis/degradation</keyword>
<keyword id="KW-0963">Cytoplasm</keyword>
<keyword id="KW-0460">Magnesium</keyword>
<keyword id="KW-0479">Metal-binding</keyword>
<keyword id="KW-0511">Multifunctional enzyme</keyword>
<keyword id="KW-0548">Nucleotidyltransferase</keyword>
<keyword id="KW-0573">Peptidoglycan synthesis</keyword>
<keyword id="KW-0677">Repeat</keyword>
<keyword id="KW-0808">Transferase</keyword>
<evidence type="ECO:0000255" key="1">
    <source>
        <dbReference type="HAMAP-Rule" id="MF_01631"/>
    </source>
</evidence>
<reference key="1">
    <citation type="journal article" date="2010" name="PLoS Genet.">
        <title>Genome sequence of the plant growth promoting endophytic bacterium Enterobacter sp. 638.</title>
        <authorList>
            <person name="Taghavi S."/>
            <person name="van der Lelie D."/>
            <person name="Hoffman A."/>
            <person name="Zhang Y.B."/>
            <person name="Walla M.D."/>
            <person name="Vangronsveld J."/>
            <person name="Newman L."/>
            <person name="Monchy S."/>
        </authorList>
    </citation>
    <scope>NUCLEOTIDE SEQUENCE [LARGE SCALE GENOMIC DNA]</scope>
    <source>
        <strain>638</strain>
    </source>
</reference>
<feature type="chain" id="PRO_1000069732" description="Bifunctional protein GlmU">
    <location>
        <begin position="1"/>
        <end position="456"/>
    </location>
</feature>
<feature type="region of interest" description="Pyrophosphorylase" evidence="1">
    <location>
        <begin position="1"/>
        <end position="229"/>
    </location>
</feature>
<feature type="region of interest" description="Linker" evidence="1">
    <location>
        <begin position="230"/>
        <end position="250"/>
    </location>
</feature>
<feature type="region of interest" description="N-acetyltransferase" evidence="1">
    <location>
        <begin position="251"/>
        <end position="456"/>
    </location>
</feature>
<feature type="active site" description="Proton acceptor" evidence="1">
    <location>
        <position position="363"/>
    </location>
</feature>
<feature type="binding site" evidence="1">
    <location>
        <begin position="11"/>
        <end position="14"/>
    </location>
    <ligand>
        <name>UDP-N-acetyl-alpha-D-glucosamine</name>
        <dbReference type="ChEBI" id="CHEBI:57705"/>
    </ligand>
</feature>
<feature type="binding site" evidence="1">
    <location>
        <position position="25"/>
    </location>
    <ligand>
        <name>UDP-N-acetyl-alpha-D-glucosamine</name>
        <dbReference type="ChEBI" id="CHEBI:57705"/>
    </ligand>
</feature>
<feature type="binding site" evidence="1">
    <location>
        <position position="76"/>
    </location>
    <ligand>
        <name>UDP-N-acetyl-alpha-D-glucosamine</name>
        <dbReference type="ChEBI" id="CHEBI:57705"/>
    </ligand>
</feature>
<feature type="binding site" evidence="1">
    <location>
        <begin position="81"/>
        <end position="82"/>
    </location>
    <ligand>
        <name>UDP-N-acetyl-alpha-D-glucosamine</name>
        <dbReference type="ChEBI" id="CHEBI:57705"/>
    </ligand>
</feature>
<feature type="binding site" evidence="1">
    <location>
        <begin position="103"/>
        <end position="105"/>
    </location>
    <ligand>
        <name>UDP-N-acetyl-alpha-D-glucosamine</name>
        <dbReference type="ChEBI" id="CHEBI:57705"/>
    </ligand>
</feature>
<feature type="binding site" evidence="1">
    <location>
        <position position="105"/>
    </location>
    <ligand>
        <name>Mg(2+)</name>
        <dbReference type="ChEBI" id="CHEBI:18420"/>
    </ligand>
</feature>
<feature type="binding site" evidence="1">
    <location>
        <position position="140"/>
    </location>
    <ligand>
        <name>UDP-N-acetyl-alpha-D-glucosamine</name>
        <dbReference type="ChEBI" id="CHEBI:57705"/>
    </ligand>
</feature>
<feature type="binding site" evidence="1">
    <location>
        <position position="154"/>
    </location>
    <ligand>
        <name>UDP-N-acetyl-alpha-D-glucosamine</name>
        <dbReference type="ChEBI" id="CHEBI:57705"/>
    </ligand>
</feature>
<feature type="binding site" evidence="1">
    <location>
        <position position="169"/>
    </location>
    <ligand>
        <name>UDP-N-acetyl-alpha-D-glucosamine</name>
        <dbReference type="ChEBI" id="CHEBI:57705"/>
    </ligand>
</feature>
<feature type="binding site" evidence="1">
    <location>
        <position position="227"/>
    </location>
    <ligand>
        <name>Mg(2+)</name>
        <dbReference type="ChEBI" id="CHEBI:18420"/>
    </ligand>
</feature>
<feature type="binding site" evidence="1">
    <location>
        <position position="227"/>
    </location>
    <ligand>
        <name>UDP-N-acetyl-alpha-D-glucosamine</name>
        <dbReference type="ChEBI" id="CHEBI:57705"/>
    </ligand>
</feature>
<feature type="binding site" evidence="1">
    <location>
        <position position="333"/>
    </location>
    <ligand>
        <name>UDP-N-acetyl-alpha-D-glucosamine</name>
        <dbReference type="ChEBI" id="CHEBI:57705"/>
    </ligand>
</feature>
<feature type="binding site" evidence="1">
    <location>
        <position position="351"/>
    </location>
    <ligand>
        <name>UDP-N-acetyl-alpha-D-glucosamine</name>
        <dbReference type="ChEBI" id="CHEBI:57705"/>
    </ligand>
</feature>
<feature type="binding site" evidence="1">
    <location>
        <position position="366"/>
    </location>
    <ligand>
        <name>UDP-N-acetyl-alpha-D-glucosamine</name>
        <dbReference type="ChEBI" id="CHEBI:57705"/>
    </ligand>
</feature>
<feature type="binding site" evidence="1">
    <location>
        <position position="377"/>
    </location>
    <ligand>
        <name>UDP-N-acetyl-alpha-D-glucosamine</name>
        <dbReference type="ChEBI" id="CHEBI:57705"/>
    </ligand>
</feature>
<feature type="binding site" evidence="1">
    <location>
        <position position="380"/>
    </location>
    <ligand>
        <name>acetyl-CoA</name>
        <dbReference type="ChEBI" id="CHEBI:57288"/>
    </ligand>
</feature>
<feature type="binding site" evidence="1">
    <location>
        <begin position="386"/>
        <end position="387"/>
    </location>
    <ligand>
        <name>acetyl-CoA</name>
        <dbReference type="ChEBI" id="CHEBI:57288"/>
    </ligand>
</feature>
<feature type="binding site" evidence="1">
    <location>
        <position position="405"/>
    </location>
    <ligand>
        <name>acetyl-CoA</name>
        <dbReference type="ChEBI" id="CHEBI:57288"/>
    </ligand>
</feature>
<feature type="binding site" evidence="1">
    <location>
        <position position="423"/>
    </location>
    <ligand>
        <name>acetyl-CoA</name>
        <dbReference type="ChEBI" id="CHEBI:57288"/>
    </ligand>
</feature>
<feature type="binding site" evidence="1">
    <location>
        <position position="440"/>
    </location>
    <ligand>
        <name>acetyl-CoA</name>
        <dbReference type="ChEBI" id="CHEBI:57288"/>
    </ligand>
</feature>
<organism>
    <name type="scientific">Enterobacter sp. (strain 638)</name>
    <dbReference type="NCBI Taxonomy" id="399742"/>
    <lineage>
        <taxon>Bacteria</taxon>
        <taxon>Pseudomonadati</taxon>
        <taxon>Pseudomonadota</taxon>
        <taxon>Gammaproteobacteria</taxon>
        <taxon>Enterobacterales</taxon>
        <taxon>Enterobacteriaceae</taxon>
        <taxon>Enterobacter</taxon>
    </lineage>
</organism>
<name>GLMU_ENT38</name>
<sequence>MLNNTMSVVILAAGKGTRMYSDLPKVLHTLAGKPMVQHVIDAANELGASNVHLVYGHGGDLLKKTLSDDKLNWVLQAEQLGTGHAMQQAAPFFADDEDILMLYGDVPLIAVETLTRLREAKPQGGIGLLTVKLDDPTGYGRITRENGKVTGIVEHKDASDEQRQIQEINTGILIANGADLKRWLSKLNNNNAQGEYYITDIIAMAHHEGHEITAVHPTRISETDGVNNRLQLSRLERIYQAEQAEKLLLAGVMLRDPARFDLRGTLAHGRDVEIDTNVIIEGQVTLGHRVKIGTGCVIKNSVIGDDCEISPYSVVEDARLDAACTIGPFARLRPGAELLEGAHVGNFVEMKKARLGKGSKAGHLTYLGDAEIGDNVNIGAGTITCNYDGANKFKTIIGDDVFVGSDSQLVAPVTIGKGVTIAAGTTVTRDVAENELVLSRVPQVNKQGWQRPVKKK</sequence>